<accession>P26381</accession>
<proteinExistence type="predicted"/>
<keyword id="KW-1003">Cell membrane</keyword>
<keyword id="KW-0472">Membrane</keyword>
<keyword id="KW-0598">Phosphotransferase system</keyword>
<keyword id="KW-1185">Reference proteome</keyword>
<keyword id="KW-0762">Sugar transport</keyword>
<keyword id="KW-0812">Transmembrane</keyword>
<keyword id="KW-1133">Transmembrane helix</keyword>
<keyword id="KW-0813">Transport</keyword>
<protein>
    <recommendedName>
        <fullName>Fructose permease IIC component</fullName>
    </recommendedName>
    <alternativeName>
        <fullName>EIIC-Fru</fullName>
    </alternativeName>
    <alternativeName>
        <fullName>PTS system fructose-specific EIIC component</fullName>
    </alternativeName>
    <alternativeName>
        <fullName>p28</fullName>
    </alternativeName>
</protein>
<evidence type="ECO:0000255" key="1">
    <source>
        <dbReference type="PROSITE-ProRule" id="PRU00429"/>
    </source>
</evidence>
<evidence type="ECO:0000305" key="2"/>
<sequence>MSSLQIILLLIIAAITGIASVLDEGQTHRPLVACTLVGLVLGDLKTGIILGGTLELMALGWMNVGLAMAPDTAIASVISTILVITADQGIGEGIAVAVALAAAGQALTIFVRTITVFFIHRADQYAKAGNIKGIEIMHITAMVFQALRVMIPTLIVALISVSAVQAFLGNIPDVITKGLQIGGGIIVVVGYAMVINMMNIPYLKPFFYIGFLLAAFTDFNLVGFGALGLCLALLYQQVMQKQSAHGAVAAASDSGSVAVYDDDDDDLDA</sequence>
<gene>
    <name type="primary">levF</name>
    <name type="ordered locus">BSU27050</name>
</gene>
<reference key="1">
    <citation type="journal article" date="1990" name="J. Mol. Biol.">
        <title>Levanase operon of Bacillus subtilis includes a fructose-specific phosphotransferase system regulating the expression of the operon.</title>
        <authorList>
            <person name="Martin-Verstraete I."/>
            <person name="Debarbouille M."/>
            <person name="Klier A."/>
            <person name="Rapoport G."/>
        </authorList>
    </citation>
    <scope>NUCLEOTIDE SEQUENCE [GENOMIC DNA]</scope>
    <source>
        <strain>168</strain>
    </source>
</reference>
<reference key="2">
    <citation type="journal article" date="1997" name="Microbiology">
        <title>A 23911 bp region of the Bacillus subtilis genome comprising genes located upstream and downstream of the lev operon.</title>
        <authorList>
            <person name="Parro V."/>
            <person name="San Roman M."/>
            <person name="Galindo I."/>
            <person name="Purnelle B."/>
            <person name="Bolotin A."/>
            <person name="Sorokin A."/>
            <person name="Mellado R.P."/>
        </authorList>
    </citation>
    <scope>NUCLEOTIDE SEQUENCE [GENOMIC DNA]</scope>
    <source>
        <strain>168</strain>
    </source>
</reference>
<reference key="3">
    <citation type="journal article" date="1997" name="Nature">
        <title>The complete genome sequence of the Gram-positive bacterium Bacillus subtilis.</title>
        <authorList>
            <person name="Kunst F."/>
            <person name="Ogasawara N."/>
            <person name="Moszer I."/>
            <person name="Albertini A.M."/>
            <person name="Alloni G."/>
            <person name="Azevedo V."/>
            <person name="Bertero M.G."/>
            <person name="Bessieres P."/>
            <person name="Bolotin A."/>
            <person name="Borchert S."/>
            <person name="Borriss R."/>
            <person name="Boursier L."/>
            <person name="Brans A."/>
            <person name="Braun M."/>
            <person name="Brignell S.C."/>
            <person name="Bron S."/>
            <person name="Brouillet S."/>
            <person name="Bruschi C.V."/>
            <person name="Caldwell B."/>
            <person name="Capuano V."/>
            <person name="Carter N.M."/>
            <person name="Choi S.-K."/>
            <person name="Codani J.-J."/>
            <person name="Connerton I.F."/>
            <person name="Cummings N.J."/>
            <person name="Daniel R.A."/>
            <person name="Denizot F."/>
            <person name="Devine K.M."/>
            <person name="Duesterhoeft A."/>
            <person name="Ehrlich S.D."/>
            <person name="Emmerson P.T."/>
            <person name="Entian K.-D."/>
            <person name="Errington J."/>
            <person name="Fabret C."/>
            <person name="Ferrari E."/>
            <person name="Foulger D."/>
            <person name="Fritz C."/>
            <person name="Fujita M."/>
            <person name="Fujita Y."/>
            <person name="Fuma S."/>
            <person name="Galizzi A."/>
            <person name="Galleron N."/>
            <person name="Ghim S.-Y."/>
            <person name="Glaser P."/>
            <person name="Goffeau A."/>
            <person name="Golightly E.J."/>
            <person name="Grandi G."/>
            <person name="Guiseppi G."/>
            <person name="Guy B.J."/>
            <person name="Haga K."/>
            <person name="Haiech J."/>
            <person name="Harwood C.R."/>
            <person name="Henaut A."/>
            <person name="Hilbert H."/>
            <person name="Holsappel S."/>
            <person name="Hosono S."/>
            <person name="Hullo M.-F."/>
            <person name="Itaya M."/>
            <person name="Jones L.-M."/>
            <person name="Joris B."/>
            <person name="Karamata D."/>
            <person name="Kasahara Y."/>
            <person name="Klaerr-Blanchard M."/>
            <person name="Klein C."/>
            <person name="Kobayashi Y."/>
            <person name="Koetter P."/>
            <person name="Koningstein G."/>
            <person name="Krogh S."/>
            <person name="Kumano M."/>
            <person name="Kurita K."/>
            <person name="Lapidus A."/>
            <person name="Lardinois S."/>
            <person name="Lauber J."/>
            <person name="Lazarevic V."/>
            <person name="Lee S.-M."/>
            <person name="Levine A."/>
            <person name="Liu H."/>
            <person name="Masuda S."/>
            <person name="Mauel C."/>
            <person name="Medigue C."/>
            <person name="Medina N."/>
            <person name="Mellado R.P."/>
            <person name="Mizuno M."/>
            <person name="Moestl D."/>
            <person name="Nakai S."/>
            <person name="Noback M."/>
            <person name="Noone D."/>
            <person name="O'Reilly M."/>
            <person name="Ogawa K."/>
            <person name="Ogiwara A."/>
            <person name="Oudega B."/>
            <person name="Park S.-H."/>
            <person name="Parro V."/>
            <person name="Pohl T.M."/>
            <person name="Portetelle D."/>
            <person name="Porwollik S."/>
            <person name="Prescott A.M."/>
            <person name="Presecan E."/>
            <person name="Pujic P."/>
            <person name="Purnelle B."/>
            <person name="Rapoport G."/>
            <person name="Rey M."/>
            <person name="Reynolds S."/>
            <person name="Rieger M."/>
            <person name="Rivolta C."/>
            <person name="Rocha E."/>
            <person name="Roche B."/>
            <person name="Rose M."/>
            <person name="Sadaie Y."/>
            <person name="Sato T."/>
            <person name="Scanlan E."/>
            <person name="Schleich S."/>
            <person name="Schroeter R."/>
            <person name="Scoffone F."/>
            <person name="Sekiguchi J."/>
            <person name="Sekowska A."/>
            <person name="Seror S.J."/>
            <person name="Serror P."/>
            <person name="Shin B.-S."/>
            <person name="Soldo B."/>
            <person name="Sorokin A."/>
            <person name="Tacconi E."/>
            <person name="Takagi T."/>
            <person name="Takahashi H."/>
            <person name="Takemaru K."/>
            <person name="Takeuchi M."/>
            <person name="Tamakoshi A."/>
            <person name="Tanaka T."/>
            <person name="Terpstra P."/>
            <person name="Tognoni A."/>
            <person name="Tosato V."/>
            <person name="Uchiyama S."/>
            <person name="Vandenbol M."/>
            <person name="Vannier F."/>
            <person name="Vassarotti A."/>
            <person name="Viari A."/>
            <person name="Wambutt R."/>
            <person name="Wedler E."/>
            <person name="Wedler H."/>
            <person name="Weitzenegger T."/>
            <person name="Winters P."/>
            <person name="Wipat A."/>
            <person name="Yamamoto H."/>
            <person name="Yamane K."/>
            <person name="Yasumoto K."/>
            <person name="Yata K."/>
            <person name="Yoshida K."/>
            <person name="Yoshikawa H.-F."/>
            <person name="Zumstein E."/>
            <person name="Yoshikawa H."/>
            <person name="Danchin A."/>
        </authorList>
    </citation>
    <scope>NUCLEOTIDE SEQUENCE [LARGE SCALE GENOMIC DNA]</scope>
    <source>
        <strain>168</strain>
    </source>
</reference>
<organism>
    <name type="scientific">Bacillus subtilis (strain 168)</name>
    <dbReference type="NCBI Taxonomy" id="224308"/>
    <lineage>
        <taxon>Bacteria</taxon>
        <taxon>Bacillati</taxon>
        <taxon>Bacillota</taxon>
        <taxon>Bacilli</taxon>
        <taxon>Bacillales</taxon>
        <taxon>Bacillaceae</taxon>
        <taxon>Bacillus</taxon>
    </lineage>
</organism>
<dbReference type="EMBL" id="X56098">
    <property type="protein sequence ID" value="CAA39579.1"/>
    <property type="molecule type" value="Genomic_DNA"/>
</dbReference>
<dbReference type="EMBL" id="X92868">
    <property type="protein sequence ID" value="CAA63463.1"/>
    <property type="molecule type" value="Genomic_DNA"/>
</dbReference>
<dbReference type="EMBL" id="AL009126">
    <property type="protein sequence ID" value="CAB14647.1"/>
    <property type="molecule type" value="Genomic_DNA"/>
</dbReference>
<dbReference type="PIR" id="S11400">
    <property type="entry name" value="S11400"/>
</dbReference>
<dbReference type="RefSeq" id="NP_390583.1">
    <property type="nucleotide sequence ID" value="NC_000964.3"/>
</dbReference>
<dbReference type="RefSeq" id="WP_003229833.1">
    <property type="nucleotide sequence ID" value="NZ_OZ025638.1"/>
</dbReference>
<dbReference type="SMR" id="P26381"/>
<dbReference type="FunCoup" id="P26381">
    <property type="interactions" value="50"/>
</dbReference>
<dbReference type="STRING" id="224308.BSU27050"/>
<dbReference type="TCDB" id="4.A.6.1.2">
    <property type="family name" value="the pts mannose-fructose-sorbose (man) family"/>
</dbReference>
<dbReference type="PaxDb" id="224308-BSU27050"/>
<dbReference type="EnsemblBacteria" id="CAB14647">
    <property type="protein sequence ID" value="CAB14647"/>
    <property type="gene ID" value="BSU_27050"/>
</dbReference>
<dbReference type="GeneID" id="937602"/>
<dbReference type="KEGG" id="bsu:BSU27050"/>
<dbReference type="PATRIC" id="fig|224308.179.peg.2938"/>
<dbReference type="eggNOG" id="COG3715">
    <property type="taxonomic scope" value="Bacteria"/>
</dbReference>
<dbReference type="InParanoid" id="P26381"/>
<dbReference type="OrthoDB" id="7058816at2"/>
<dbReference type="PhylomeDB" id="P26381"/>
<dbReference type="BioCyc" id="BSUB:BSU27050-MONOMER"/>
<dbReference type="Proteomes" id="UP000001570">
    <property type="component" value="Chromosome"/>
</dbReference>
<dbReference type="GO" id="GO:0005886">
    <property type="term" value="C:plasma membrane"/>
    <property type="evidence" value="ECO:0000318"/>
    <property type="project" value="GO_Central"/>
</dbReference>
<dbReference type="GO" id="GO:0009401">
    <property type="term" value="P:phosphoenolpyruvate-dependent sugar phosphotransferase system"/>
    <property type="evidence" value="ECO:0000318"/>
    <property type="project" value="GO_Central"/>
</dbReference>
<dbReference type="InterPro" id="IPR050303">
    <property type="entry name" value="GatZ_KbaZ_carbometab"/>
</dbReference>
<dbReference type="InterPro" id="IPR004700">
    <property type="entry name" value="PTS_IIC_man"/>
</dbReference>
<dbReference type="NCBIfam" id="TIGR00822">
    <property type="entry name" value="EII-Sor"/>
    <property type="match status" value="1"/>
</dbReference>
<dbReference type="NCBIfam" id="NF011647">
    <property type="entry name" value="PRK15065.1"/>
    <property type="match status" value="1"/>
</dbReference>
<dbReference type="PANTHER" id="PTHR32502">
    <property type="entry name" value="N-ACETYLGALACTOSAMINE PERMEASE II COMPONENT-RELATED"/>
    <property type="match status" value="1"/>
</dbReference>
<dbReference type="PANTHER" id="PTHR32502:SF4">
    <property type="entry name" value="PTS SYSTEM MANNOSE-SPECIFIC EIIC COMPONENT"/>
    <property type="match status" value="1"/>
</dbReference>
<dbReference type="Pfam" id="PF03609">
    <property type="entry name" value="EII-Sor"/>
    <property type="match status" value="1"/>
</dbReference>
<dbReference type="PROSITE" id="PS51106">
    <property type="entry name" value="PTS_EIIC_TYPE_4"/>
    <property type="match status" value="1"/>
</dbReference>
<name>PTFC_BACSU</name>
<feature type="chain" id="PRO_0000186521" description="Fructose permease IIC component">
    <location>
        <begin position="1"/>
        <end position="269"/>
    </location>
</feature>
<feature type="transmembrane region" description="Helical" evidence="1">
    <location>
        <begin position="2"/>
        <end position="22"/>
    </location>
</feature>
<feature type="transmembrane region" description="Helical" evidence="1">
    <location>
        <begin position="35"/>
        <end position="54"/>
    </location>
</feature>
<feature type="transmembrane region" description="Helical" evidence="1">
    <location>
        <begin position="64"/>
        <end position="86"/>
    </location>
</feature>
<feature type="transmembrane region" description="Helical" evidence="1">
    <location>
        <begin position="90"/>
        <end position="110"/>
    </location>
</feature>
<feature type="transmembrane region" description="Helical" evidence="1">
    <location>
        <begin position="149"/>
        <end position="169"/>
    </location>
</feature>
<feature type="transmembrane region" description="Helical" evidence="1">
    <location>
        <begin position="181"/>
        <end position="201"/>
    </location>
</feature>
<feature type="transmembrane region" description="Helical" evidence="1">
    <location>
        <begin position="206"/>
        <end position="226"/>
    </location>
</feature>
<feature type="domain" description="PTS EIIC type-4" evidence="1">
    <location>
        <begin position="1"/>
        <end position="234"/>
    </location>
</feature>
<comment type="function">
    <text>The phosphoenolpyruvate-dependent sugar phosphotransferase system (PTS), a major carbohydrate active -transport system, catalyzes the phosphorylation of incoming sugar substrates concomitant with their translocation across the cell membrane. This system is involved in fructose transport.</text>
</comment>
<comment type="subcellular location">
    <subcellularLocation>
        <location evidence="2">Cell membrane</location>
        <topology evidence="2">Multi-pass membrane protein</topology>
    </subcellularLocation>
</comment>
<comment type="domain">
    <text>The EIIC domain forms the PTS system translocation channel and contains the specific substrate-binding site.</text>
</comment>